<proteinExistence type="evidence at transcript level"/>
<keyword id="KW-0131">Cell cycle</keyword>
<keyword id="KW-0132">Cell division</keyword>
<keyword id="KW-0195">Cyclin</keyword>
<keyword id="KW-0469">Meiosis</keyword>
<keyword id="KW-0539">Nucleus</keyword>
<keyword id="KW-1185">Reference proteome</keyword>
<keyword id="KW-0832">Ubl conjugation</keyword>
<reference key="1">
    <citation type="submission" date="2004-09" db="EMBL/GenBank/DDBJ databases">
        <title>Molecular phylogeny of cyclin B3.</title>
        <authorList>
            <person name="Lozano J.-C."/>
            <person name="Guyon R."/>
            <person name="Schatt P."/>
            <person name="Andre C."/>
            <person name="Picard A."/>
        </authorList>
    </citation>
    <scope>NUCLEOTIDE SEQUENCE [MRNA]</scope>
    <source>
        <strain>Cocker spaniel</strain>
        <tissue>Kidney</tissue>
    </source>
</reference>
<accession>Q659K0</accession>
<comment type="function">
    <text evidence="1">Cyclins are positive regulatory subunits of the cyclin-dependent kinases (CDKs), and thereby play an essential role in the control of the cell cycle, notably via their destruction during cell division. Its tissue specificity suggest that it may be required during early meiotic prophase I (By similarity).</text>
</comment>
<comment type="subunit">
    <text evidence="1">Interacts with CDK2 kinase.</text>
</comment>
<comment type="subcellular location">
    <subcellularLocation>
        <location evidence="1">Nucleus</location>
    </subcellularLocation>
</comment>
<comment type="domain">
    <text evidence="1">The N-terminal destruction box (D-box) probably acts as a recognition signal for degradation via the ubiquitin-proteasome pathway.</text>
</comment>
<comment type="PTM">
    <text evidence="1 3">Ubiquitinated (Probable). Ubiquitination leads to its degradation during anaphase entry, after degradation of CCNB1 (By similarity).</text>
</comment>
<comment type="similarity">
    <text evidence="3">Belongs to the cyclin family. Cyclin AB subfamily.</text>
</comment>
<protein>
    <recommendedName>
        <fullName>G2/mitotic-specific cyclin-B3</fullName>
    </recommendedName>
</protein>
<gene>
    <name type="primary">CCNB3</name>
</gene>
<organism>
    <name type="scientific">Canis lupus familiaris</name>
    <name type="common">Dog</name>
    <name type="synonym">Canis familiaris</name>
    <dbReference type="NCBI Taxonomy" id="9615"/>
    <lineage>
        <taxon>Eukaryota</taxon>
        <taxon>Metazoa</taxon>
        <taxon>Chordata</taxon>
        <taxon>Craniata</taxon>
        <taxon>Vertebrata</taxon>
        <taxon>Euteleostomi</taxon>
        <taxon>Mammalia</taxon>
        <taxon>Eutheria</taxon>
        <taxon>Laurasiatheria</taxon>
        <taxon>Carnivora</taxon>
        <taxon>Caniformia</taxon>
        <taxon>Canidae</taxon>
        <taxon>Canis</taxon>
    </lineage>
</organism>
<sequence>MPLPLPSRSSKPETKKSRSSKIVPSGNNGQSEKRGENYQEKISSSSPRRLCKKRSAFEDLTNASQSQPAQLKKEANKEFVKDVPKKIKGNTPALGLAKSNEVNMVSYKLESSPGVVSTTLVPNITEKPLILERSTTSGTITTEEASFFRKPLILKEESTTEDTGLIKRSLFLKKFTNKGEISLMEKPTSVQEEADSNDEFVVKLITFGKKHKTEEVAITKGTLSLKKMCTYQEDLALQDITVEENSFFMEPTNFRKKPKTDDVTPTKKMLSLKKKKYITLGKVSRMKKPLVLQKTNSEDESPLIKEPLAFKKKPTKKETTFTLRPLSLKKYTTQGKMAHLKKPLESQNTSGEKALIKEPLSFKKKPITKEESLFQEFSASQEKHTTDREVVLLKKPQVLQEEKDSKDKFLMEPMFLRKKCTTKETNPTKKPLPIKKKCTIQGKMYYLKKPLVLQKTTPGEESFVKEPLSFKKNTTELSMLQEKYTTQEEVSVLKKALTLQKTLTEEESHLKEPLAFKKKHTTEEATPTKKLSSLKRKRFTAQGKRSCLMKPLVLQTSSGEKTHIKEPLSFKKRSAIEESFFKESPVLQEKHTMQGEVALLEKPGALQENVSSEDEFLMEPISFRKTHTTNEVVSTKEPLSLKKKKCTTQITMSICQELLDLQNIISKDKASFFMEPVSLREKSLAEEVILTKTPLSLKKKEITQGKIFLLKKPLVSEKTTSEEESLFKKLLPFNKKSTTEGEFLFQDPSVLQEKHTTPQEVSLSTKPLTLPEKTTTEEEPYIKEPLTLEERPTTKEEFLSQEPFSLHAKPTNEDESLFWKALGLQKTQTKEDSLKKLLTLQEKNTTDEESLLNKPSILKEELSTKVATSIEKELSLKKKPTAQGEVFLLKKQLALQENITNEESLIKQPLAFLKPSIEEAILRESLALQEKPRSEEETLFKEPLSFQEKPTLNEAFHFKEIISLNEKHSTGKELSLKEPLALQENPTQKEDTSLEDSLILQVETSSRVPSTPPESRAGMSSVGKLSTTSKSSVCESSSNKPSSSWGESSQKEMTPLEDIDRNHGDPFFNSIYAKDIFSYMKEREEKFILKEYMNKQTDISSCMRAILVDWLVEVQMTFEMSHETLYLAVKLVDHYLMEVICKRDKLQLLGSTAFLIAAKFEEPCPPCVDDFLYICDDIYQRHEMLSMEISILQTLKFDINIPIAYHFLRRYARCLHASMKTLTLSRFICEMTLQEYDYVQERASKLAAGSFLLALYMMKLRYWVPALEYYSGYKTSDLHPLVKQLNILLTLRPSNKLKTVYSKYSHQVFFEATKIPPLDMLKLEEILNYC</sequence>
<evidence type="ECO:0000250" key="1"/>
<evidence type="ECO:0000256" key="2">
    <source>
        <dbReference type="SAM" id="MobiDB-lite"/>
    </source>
</evidence>
<evidence type="ECO:0000305" key="3"/>
<dbReference type="EMBL" id="AJ833648">
    <property type="protein sequence ID" value="CAH55770.1"/>
    <property type="molecule type" value="mRNA"/>
</dbReference>
<dbReference type="RefSeq" id="NP_001005763.1">
    <property type="nucleotide sequence ID" value="NM_001005763.1"/>
</dbReference>
<dbReference type="SMR" id="Q659K0"/>
<dbReference type="FunCoup" id="Q659K0">
    <property type="interactions" value="129"/>
</dbReference>
<dbReference type="STRING" id="9615.ENSCAFP00000062608"/>
<dbReference type="PaxDb" id="9612-ENSCAFP00000023556"/>
<dbReference type="GeneID" id="449494"/>
<dbReference type="KEGG" id="cfa:449494"/>
<dbReference type="CTD" id="85417"/>
<dbReference type="eggNOG" id="KOG0653">
    <property type="taxonomic scope" value="Eukaryota"/>
</dbReference>
<dbReference type="InParanoid" id="Q659K0"/>
<dbReference type="OrthoDB" id="22400at33554"/>
<dbReference type="Proteomes" id="UP000002254">
    <property type="component" value="Unplaced"/>
</dbReference>
<dbReference type="Proteomes" id="UP000694429">
    <property type="component" value="Unplaced"/>
</dbReference>
<dbReference type="Proteomes" id="UP000694542">
    <property type="component" value="Unplaced"/>
</dbReference>
<dbReference type="Proteomes" id="UP000805418">
    <property type="component" value="Unplaced"/>
</dbReference>
<dbReference type="GO" id="GO:0000307">
    <property type="term" value="C:cyclin-dependent protein kinase holoenzyme complex"/>
    <property type="evidence" value="ECO:0000318"/>
    <property type="project" value="GO_Central"/>
</dbReference>
<dbReference type="GO" id="GO:0005737">
    <property type="term" value="C:cytoplasm"/>
    <property type="evidence" value="ECO:0000318"/>
    <property type="project" value="GO_Central"/>
</dbReference>
<dbReference type="GO" id="GO:0005634">
    <property type="term" value="C:nucleus"/>
    <property type="evidence" value="ECO:0000318"/>
    <property type="project" value="GO_Central"/>
</dbReference>
<dbReference type="GO" id="GO:0016538">
    <property type="term" value="F:cyclin-dependent protein serine/threonine kinase regulator activity"/>
    <property type="evidence" value="ECO:0000318"/>
    <property type="project" value="GO_Central"/>
</dbReference>
<dbReference type="GO" id="GO:0051301">
    <property type="term" value="P:cell division"/>
    <property type="evidence" value="ECO:0007669"/>
    <property type="project" value="UniProtKB-KW"/>
</dbReference>
<dbReference type="GO" id="GO:0000082">
    <property type="term" value="P:G1/S transition of mitotic cell cycle"/>
    <property type="evidence" value="ECO:0000318"/>
    <property type="project" value="GO_Central"/>
</dbReference>
<dbReference type="GO" id="GO:0051321">
    <property type="term" value="P:meiotic cell cycle"/>
    <property type="evidence" value="ECO:0007669"/>
    <property type="project" value="UniProtKB-KW"/>
</dbReference>
<dbReference type="CDD" id="cd20508">
    <property type="entry name" value="CYCLIN_CCNB3_rpt1"/>
    <property type="match status" value="1"/>
</dbReference>
<dbReference type="CDD" id="cd20510">
    <property type="entry name" value="CYCLIN_CCNB3_rpt2"/>
    <property type="match status" value="1"/>
</dbReference>
<dbReference type="FunFam" id="1.10.472.10:FF:000001">
    <property type="entry name" value="G2/mitotic-specific cyclin"/>
    <property type="match status" value="1"/>
</dbReference>
<dbReference type="Gene3D" id="1.10.472.10">
    <property type="entry name" value="Cyclin-like"/>
    <property type="match status" value="2"/>
</dbReference>
<dbReference type="InterPro" id="IPR039361">
    <property type="entry name" value="Cyclin"/>
</dbReference>
<dbReference type="InterPro" id="IPR013763">
    <property type="entry name" value="Cyclin-like_dom"/>
</dbReference>
<dbReference type="InterPro" id="IPR036915">
    <property type="entry name" value="Cyclin-like_sf"/>
</dbReference>
<dbReference type="InterPro" id="IPR004367">
    <property type="entry name" value="Cyclin_C-dom"/>
</dbReference>
<dbReference type="InterPro" id="IPR006671">
    <property type="entry name" value="Cyclin_N"/>
</dbReference>
<dbReference type="InterPro" id="IPR048258">
    <property type="entry name" value="Cyclins_cyclin-box"/>
</dbReference>
<dbReference type="PANTHER" id="PTHR10177">
    <property type="entry name" value="CYCLINS"/>
    <property type="match status" value="1"/>
</dbReference>
<dbReference type="Pfam" id="PF02984">
    <property type="entry name" value="Cyclin_C"/>
    <property type="match status" value="1"/>
</dbReference>
<dbReference type="Pfam" id="PF00134">
    <property type="entry name" value="Cyclin_N"/>
    <property type="match status" value="1"/>
</dbReference>
<dbReference type="SMART" id="SM00385">
    <property type="entry name" value="CYCLIN"/>
    <property type="match status" value="2"/>
</dbReference>
<dbReference type="SMART" id="SM01332">
    <property type="entry name" value="Cyclin_C"/>
    <property type="match status" value="1"/>
</dbReference>
<dbReference type="SUPFAM" id="SSF47954">
    <property type="entry name" value="Cyclin-like"/>
    <property type="match status" value="2"/>
</dbReference>
<dbReference type="PROSITE" id="PS00292">
    <property type="entry name" value="CYCLINS"/>
    <property type="match status" value="1"/>
</dbReference>
<feature type="chain" id="PRO_0000080372" description="G2/mitotic-specific cyclin-B3">
    <location>
        <begin position="1"/>
        <end position="1330"/>
    </location>
</feature>
<feature type="region of interest" description="Disordered" evidence="2">
    <location>
        <begin position="1"/>
        <end position="50"/>
    </location>
</feature>
<feature type="region of interest" description="Disordered" evidence="2">
    <location>
        <begin position="1002"/>
        <end position="1059"/>
    </location>
</feature>
<feature type="short sequence motif" description="D-box">
    <location>
        <begin position="54"/>
        <end position="62"/>
    </location>
</feature>
<feature type="compositionally biased region" description="Polar residues" evidence="2">
    <location>
        <begin position="20"/>
        <end position="30"/>
    </location>
</feature>
<feature type="compositionally biased region" description="Low complexity" evidence="2">
    <location>
        <begin position="1026"/>
        <end position="1048"/>
    </location>
</feature>
<name>CCNB3_CANLF</name>